<feature type="chain" id="PRO_0000160789" description="Probable cinnamyl alcohol dehydrogenase 1">
    <location>
        <begin position="1"/>
        <end position="360"/>
    </location>
</feature>
<feature type="binding site" evidence="1">
    <location>
        <position position="47"/>
    </location>
    <ligand>
        <name>Zn(2+)</name>
        <dbReference type="ChEBI" id="CHEBI:29105"/>
        <label>1</label>
        <note>catalytic</note>
    </ligand>
</feature>
<feature type="binding site" evidence="1">
    <location>
        <position position="49"/>
    </location>
    <ligand>
        <name>NADP(+)</name>
        <dbReference type="ChEBI" id="CHEBI:58349"/>
    </ligand>
</feature>
<feature type="binding site" evidence="1">
    <location>
        <position position="69"/>
    </location>
    <ligand>
        <name>Zn(2+)</name>
        <dbReference type="ChEBI" id="CHEBI:29105"/>
        <label>1</label>
        <note>catalytic</note>
    </ligand>
</feature>
<feature type="binding site" evidence="1">
    <location>
        <position position="70"/>
    </location>
    <ligand>
        <name>Zn(2+)</name>
        <dbReference type="ChEBI" id="CHEBI:29105"/>
        <label>1</label>
        <note>catalytic</note>
    </ligand>
</feature>
<feature type="binding site" evidence="1">
    <location>
        <position position="100"/>
    </location>
    <ligand>
        <name>Zn(2+)</name>
        <dbReference type="ChEBI" id="CHEBI:29105"/>
        <label>2</label>
    </ligand>
</feature>
<feature type="binding site" evidence="1">
    <location>
        <position position="103"/>
    </location>
    <ligand>
        <name>Zn(2+)</name>
        <dbReference type="ChEBI" id="CHEBI:29105"/>
        <label>2</label>
    </ligand>
</feature>
<feature type="binding site" evidence="1">
    <location>
        <position position="106"/>
    </location>
    <ligand>
        <name>Zn(2+)</name>
        <dbReference type="ChEBI" id="CHEBI:29105"/>
        <label>2</label>
    </ligand>
</feature>
<feature type="binding site" evidence="1">
    <location>
        <position position="114"/>
    </location>
    <ligand>
        <name>Zn(2+)</name>
        <dbReference type="ChEBI" id="CHEBI:29105"/>
        <label>2</label>
    </ligand>
</feature>
<feature type="binding site" evidence="1">
    <location>
        <position position="163"/>
    </location>
    <ligand>
        <name>Zn(2+)</name>
        <dbReference type="ChEBI" id="CHEBI:29105"/>
        <label>1</label>
        <note>catalytic</note>
    </ligand>
</feature>
<feature type="binding site" evidence="1">
    <location>
        <position position="167"/>
    </location>
    <ligand>
        <name>NADP(+)</name>
        <dbReference type="ChEBI" id="CHEBI:58349"/>
    </ligand>
</feature>
<feature type="binding site" evidence="1">
    <location>
        <begin position="189"/>
        <end position="194"/>
    </location>
    <ligand>
        <name>NADP(+)</name>
        <dbReference type="ChEBI" id="CHEBI:58349"/>
    </ligand>
</feature>
<feature type="binding site" evidence="1">
    <location>
        <begin position="212"/>
        <end position="217"/>
    </location>
    <ligand>
        <name>NADP(+)</name>
        <dbReference type="ChEBI" id="CHEBI:58349"/>
    </ligand>
</feature>
<feature type="binding site" evidence="1">
    <location>
        <position position="252"/>
    </location>
    <ligand>
        <name>NADP(+)</name>
        <dbReference type="ChEBI" id="CHEBI:58349"/>
    </ligand>
</feature>
<feature type="binding site" evidence="1">
    <location>
        <position position="276"/>
    </location>
    <ligand>
        <name>NADP(+)</name>
        <dbReference type="ChEBI" id="CHEBI:58349"/>
    </ligand>
</feature>
<feature type="binding site" evidence="1">
    <location>
        <begin position="299"/>
        <end position="301"/>
    </location>
    <ligand>
        <name>NADP(+)</name>
        <dbReference type="ChEBI" id="CHEBI:58349"/>
    </ligand>
</feature>
<accession>P42495</accession>
<keyword id="KW-0438">Lignin biosynthesis</keyword>
<keyword id="KW-0479">Metal-binding</keyword>
<keyword id="KW-0521">NADP</keyword>
<keyword id="KW-0560">Oxidoreductase</keyword>
<keyword id="KW-0862">Zinc</keyword>
<reference key="1">
    <citation type="journal article" date="1993" name="Plant Cell Physiol.">
        <title>Cinnamyl alcohol dehydrogenase from Aralia cordata: cloning of the cDNA and expression of the gene in lignified tissues.</title>
        <authorList>
            <person name="Hibino T."/>
            <person name="Shibata D."/>
            <person name="Chen J.Q."/>
            <person name="Higuchi T."/>
        </authorList>
    </citation>
    <scope>NUCLEOTIDE SEQUENCE [MRNA]</scope>
</reference>
<name>CADH1_ARACO</name>
<dbReference type="EC" id="1.1.1.195" evidence="1"/>
<dbReference type="EMBL" id="D13991">
    <property type="protein sequence ID" value="BAA03099.1"/>
    <property type="molecule type" value="mRNA"/>
</dbReference>
<dbReference type="SMR" id="P42495"/>
<dbReference type="UniPathway" id="UPA00711"/>
<dbReference type="GO" id="GO:0045551">
    <property type="term" value="F:cinnamyl-alcohol dehydrogenase activity"/>
    <property type="evidence" value="ECO:0007669"/>
    <property type="project" value="UniProtKB-EC"/>
</dbReference>
<dbReference type="GO" id="GO:0050268">
    <property type="term" value="F:coniferyl-alcohol dehydrogenase activity"/>
    <property type="evidence" value="ECO:0007669"/>
    <property type="project" value="RHEA"/>
</dbReference>
<dbReference type="GO" id="GO:0008270">
    <property type="term" value="F:zinc ion binding"/>
    <property type="evidence" value="ECO:0007669"/>
    <property type="project" value="InterPro"/>
</dbReference>
<dbReference type="GO" id="GO:0009809">
    <property type="term" value="P:lignin biosynthetic process"/>
    <property type="evidence" value="ECO:0007669"/>
    <property type="project" value="UniProtKB-KW"/>
</dbReference>
<dbReference type="CDD" id="cd05283">
    <property type="entry name" value="CAD1"/>
    <property type="match status" value="1"/>
</dbReference>
<dbReference type="FunFam" id="3.40.50.720:FF:000022">
    <property type="entry name" value="Cinnamyl alcohol dehydrogenase"/>
    <property type="match status" value="1"/>
</dbReference>
<dbReference type="FunFam" id="3.90.180.10:FF:000004">
    <property type="entry name" value="probable cinnamyl alcohol dehydrogenase"/>
    <property type="match status" value="1"/>
</dbReference>
<dbReference type="FunFam" id="3.90.180.10:FF:000100">
    <property type="entry name" value="Putative cinnamyl alcohol dehydrogenase 6"/>
    <property type="match status" value="1"/>
</dbReference>
<dbReference type="Gene3D" id="3.90.180.10">
    <property type="entry name" value="Medium-chain alcohol dehydrogenases, catalytic domain"/>
    <property type="match status" value="1"/>
</dbReference>
<dbReference type="Gene3D" id="3.40.50.720">
    <property type="entry name" value="NAD(P)-binding Rossmann-like Domain"/>
    <property type="match status" value="1"/>
</dbReference>
<dbReference type="InterPro" id="IPR013149">
    <property type="entry name" value="ADH-like_C"/>
</dbReference>
<dbReference type="InterPro" id="IPR013154">
    <property type="entry name" value="ADH-like_N"/>
</dbReference>
<dbReference type="InterPro" id="IPR002328">
    <property type="entry name" value="ADH_Zn_CS"/>
</dbReference>
<dbReference type="InterPro" id="IPR047109">
    <property type="entry name" value="CAD-like"/>
</dbReference>
<dbReference type="InterPro" id="IPR011032">
    <property type="entry name" value="GroES-like_sf"/>
</dbReference>
<dbReference type="InterPro" id="IPR036291">
    <property type="entry name" value="NAD(P)-bd_dom_sf"/>
</dbReference>
<dbReference type="InterPro" id="IPR020843">
    <property type="entry name" value="PKS_ER"/>
</dbReference>
<dbReference type="PANTHER" id="PTHR42683">
    <property type="entry name" value="ALDEHYDE REDUCTASE"/>
    <property type="match status" value="1"/>
</dbReference>
<dbReference type="Pfam" id="PF08240">
    <property type="entry name" value="ADH_N"/>
    <property type="match status" value="1"/>
</dbReference>
<dbReference type="Pfam" id="PF00107">
    <property type="entry name" value="ADH_zinc_N"/>
    <property type="match status" value="1"/>
</dbReference>
<dbReference type="SMART" id="SM00829">
    <property type="entry name" value="PKS_ER"/>
    <property type="match status" value="1"/>
</dbReference>
<dbReference type="SUPFAM" id="SSF50129">
    <property type="entry name" value="GroES-like"/>
    <property type="match status" value="1"/>
</dbReference>
<dbReference type="SUPFAM" id="SSF51735">
    <property type="entry name" value="NAD(P)-binding Rossmann-fold domains"/>
    <property type="match status" value="1"/>
</dbReference>
<dbReference type="PROSITE" id="PS00059">
    <property type="entry name" value="ADH_ZINC"/>
    <property type="match status" value="1"/>
</dbReference>
<proteinExistence type="evidence at transcript level"/>
<evidence type="ECO:0000250" key="1">
    <source>
        <dbReference type="UniProtKB" id="O49482"/>
    </source>
</evidence>
<evidence type="ECO:0000305" key="2"/>
<protein>
    <recommendedName>
        <fullName>Probable cinnamyl alcohol dehydrogenase 1</fullName>
        <shortName>CAD 1</shortName>
        <ecNumber evidence="1">1.1.1.195</ecNumber>
    </recommendedName>
</protein>
<gene>
    <name type="primary">CAD1</name>
</gene>
<comment type="function">
    <text evidence="1">Involved in lignin biosynthesis. Catalyzes the final step specific for the production of lignin monomers. Catalyzes the NADPH-dependent reduction of coniferaldehyde, 5-hydroxyconiferaldehyde, sinapaldehyde, 4-coumaraldehyde and caffeyl aldehyde to their respective alcohols.</text>
</comment>
<comment type="catalytic activity">
    <reaction evidence="1">
        <text>(E)-cinnamyl alcohol + NADP(+) = (E)-cinnamaldehyde + NADPH + H(+)</text>
        <dbReference type="Rhea" id="RHEA:10392"/>
        <dbReference type="ChEBI" id="CHEBI:15378"/>
        <dbReference type="ChEBI" id="CHEBI:16731"/>
        <dbReference type="ChEBI" id="CHEBI:33227"/>
        <dbReference type="ChEBI" id="CHEBI:57783"/>
        <dbReference type="ChEBI" id="CHEBI:58349"/>
        <dbReference type="EC" id="1.1.1.195"/>
    </reaction>
    <physiologicalReaction direction="right-to-left" evidence="1">
        <dbReference type="Rhea" id="RHEA:10394"/>
    </physiologicalReaction>
</comment>
<comment type="catalytic activity">
    <reaction evidence="1">
        <text>(E)-coniferol + NADP(+) = (E)-coniferaldehyde + NADPH + H(+)</text>
        <dbReference type="Rhea" id="RHEA:22444"/>
        <dbReference type="ChEBI" id="CHEBI:15378"/>
        <dbReference type="ChEBI" id="CHEBI:16547"/>
        <dbReference type="ChEBI" id="CHEBI:17745"/>
        <dbReference type="ChEBI" id="CHEBI:57783"/>
        <dbReference type="ChEBI" id="CHEBI:58349"/>
        <dbReference type="EC" id="1.1.1.195"/>
    </reaction>
    <physiologicalReaction direction="right-to-left" evidence="1">
        <dbReference type="Rhea" id="RHEA:22446"/>
    </physiologicalReaction>
</comment>
<comment type="catalytic activity">
    <reaction evidence="1">
        <text>(E)-sinapyl alcohol + NADP(+) = (E)-sinapaldehyde + NADPH + H(+)</text>
        <dbReference type="Rhea" id="RHEA:45704"/>
        <dbReference type="ChEBI" id="CHEBI:15378"/>
        <dbReference type="ChEBI" id="CHEBI:27949"/>
        <dbReference type="ChEBI" id="CHEBI:57783"/>
        <dbReference type="ChEBI" id="CHEBI:58349"/>
        <dbReference type="ChEBI" id="CHEBI:64557"/>
        <dbReference type="EC" id="1.1.1.195"/>
    </reaction>
    <physiologicalReaction direction="right-to-left" evidence="1">
        <dbReference type="Rhea" id="RHEA:45706"/>
    </physiologicalReaction>
</comment>
<comment type="catalytic activity">
    <reaction evidence="1">
        <text>(E)-4-coumaroyl alcohol + NADP(+) = (E)-4-coumaraldehyde + NADPH + H(+)</text>
        <dbReference type="Rhea" id="RHEA:45724"/>
        <dbReference type="ChEBI" id="CHEBI:15378"/>
        <dbReference type="ChEBI" id="CHEBI:28353"/>
        <dbReference type="ChEBI" id="CHEBI:57783"/>
        <dbReference type="ChEBI" id="CHEBI:58349"/>
        <dbReference type="ChEBI" id="CHEBI:64555"/>
        <dbReference type="EC" id="1.1.1.195"/>
    </reaction>
    <physiologicalReaction direction="right-to-left" evidence="1">
        <dbReference type="Rhea" id="RHEA:45726"/>
    </physiologicalReaction>
</comment>
<comment type="catalytic activity">
    <reaction evidence="1">
        <text>(E)-caffeyl alcohol + NADP(+) = (E)-caffeyl aldehyde + NADPH + H(+)</text>
        <dbReference type="Rhea" id="RHEA:45728"/>
        <dbReference type="ChEBI" id="CHEBI:15378"/>
        <dbReference type="ChEBI" id="CHEBI:28323"/>
        <dbReference type="ChEBI" id="CHEBI:31334"/>
        <dbReference type="ChEBI" id="CHEBI:57783"/>
        <dbReference type="ChEBI" id="CHEBI:58349"/>
    </reaction>
    <physiologicalReaction direction="right-to-left" evidence="1">
        <dbReference type="Rhea" id="RHEA:45730"/>
    </physiologicalReaction>
</comment>
<comment type="cofactor">
    <cofactor evidence="1">
        <name>Zn(2+)</name>
        <dbReference type="ChEBI" id="CHEBI:29105"/>
    </cofactor>
    <text evidence="1">Binds 2 Zn(2+) ions per subunit.</text>
</comment>
<comment type="pathway">
    <text evidence="1">Aromatic compound metabolism; phenylpropanoid biosynthesis.</text>
</comment>
<comment type="subunit">
    <text evidence="1">Homodimer.</text>
</comment>
<comment type="similarity">
    <text evidence="2">Belongs to the zinc-containing alcohol dehydrogenase family.</text>
</comment>
<sequence>MGSLEAERKTTGWAARDPSGVLSPYTYTLRETGPEDVFIKIIYCGICHTDIHQIKNDLGASNYPMVPGHEVVGEVVEVGSDVTKFKVGDCVGDGTIVGCCKTCRPCKADVEQYCNKKIWSYNDVYTDGKPTQGGFSGHMVVDQKFVVKIPDGMAPEQAAPLLCAGVTVYSPLTHFGLKEISGLRGGILGLGGVGHMGVKLAKAMGHHVTVISSSDKKKEEAIDHLGADAYLVSSDATQMQEAADSLDYIIDTVPVFHPLEPYLSLLKLDGKLILMGVINTPLQFISPMVMLGRKAITGSFIGSMKETEEMLDFCNEKGITSTIEVVKMDYINTAFERLEKNDVRYRFVVDVAGSKLDQET</sequence>
<organism>
    <name type="scientific">Aralia cordata</name>
    <name type="common">Udo</name>
    <name type="synonym">Cordate spikenard</name>
    <dbReference type="NCBI Taxonomy" id="29746"/>
    <lineage>
        <taxon>Eukaryota</taxon>
        <taxon>Viridiplantae</taxon>
        <taxon>Streptophyta</taxon>
        <taxon>Embryophyta</taxon>
        <taxon>Tracheophyta</taxon>
        <taxon>Spermatophyta</taxon>
        <taxon>Magnoliopsida</taxon>
        <taxon>eudicotyledons</taxon>
        <taxon>Gunneridae</taxon>
        <taxon>Pentapetalae</taxon>
        <taxon>asterids</taxon>
        <taxon>campanulids</taxon>
        <taxon>Apiales</taxon>
        <taxon>Araliaceae</taxon>
        <taxon>Aralia</taxon>
    </lineage>
</organism>